<keyword id="KW-0233">DNA recombination</keyword>
<keyword id="KW-0238">DNA-binding</keyword>
<keyword id="KW-0614">Plasmid</keyword>
<keyword id="KW-0814">Transposable element</keyword>
<keyword id="KW-0815">Transposition</keyword>
<reference key="1">
    <citation type="submission" date="2000-04" db="EMBL/GenBank/DDBJ databases">
        <title>Complete nucleotide sequence of the F plasmid: its implications for organization and diversification of plasmid genomes.</title>
        <authorList>
            <person name="Shimizu H."/>
            <person name="Saitoh Y."/>
            <person name="Suda Y."/>
            <person name="Uehara K."/>
            <person name="Sampei G."/>
            <person name="Mizobuchi K."/>
        </authorList>
    </citation>
    <scope>NUCLEOTIDE SEQUENCE [LARGE SCALE GENOMIC DNA]</scope>
    <source>
        <strain>K12 / CR63</strain>
    </source>
</reference>
<accession>Q9JMT3</accession>
<gene>
    <name type="primary">insF7</name>
    <name type="synonym">ybfB</name>
    <name type="ordered locus">ECOK12F017</name>
</gene>
<evidence type="ECO:0000255" key="1">
    <source>
        <dbReference type="PROSITE-ProRule" id="PRU00457"/>
    </source>
</evidence>
<evidence type="ECO:0000305" key="2"/>
<geneLocation type="plasmid">
    <name>F</name>
</geneLocation>
<dbReference type="EMBL" id="AP001918">
    <property type="protein sequence ID" value="BAA97887.1"/>
    <property type="molecule type" value="Genomic_DNA"/>
</dbReference>
<dbReference type="RefSeq" id="NP_061396.1">
    <property type="nucleotide sequence ID" value="NC_002483.1"/>
</dbReference>
<dbReference type="KEGG" id="ecoc:C3026_24190"/>
<dbReference type="PATRIC" id="fig|83333.107.peg.583"/>
<dbReference type="PhylomeDB" id="Q9JMT3"/>
<dbReference type="GO" id="GO:0003677">
    <property type="term" value="F:DNA binding"/>
    <property type="evidence" value="ECO:0007669"/>
    <property type="project" value="UniProtKB-KW"/>
</dbReference>
<dbReference type="GO" id="GO:0015074">
    <property type="term" value="P:DNA integration"/>
    <property type="evidence" value="ECO:0007669"/>
    <property type="project" value="InterPro"/>
</dbReference>
<dbReference type="GO" id="GO:0006310">
    <property type="term" value="P:DNA recombination"/>
    <property type="evidence" value="ECO:0007669"/>
    <property type="project" value="UniProtKB-KW"/>
</dbReference>
<dbReference type="GO" id="GO:0032196">
    <property type="term" value="P:transposition"/>
    <property type="evidence" value="ECO:0007669"/>
    <property type="project" value="UniProtKB-KW"/>
</dbReference>
<dbReference type="FunFam" id="3.30.420.10:FF:000030">
    <property type="entry name" value="IS3, transposase orfB"/>
    <property type="match status" value="1"/>
</dbReference>
<dbReference type="Gene3D" id="3.30.420.10">
    <property type="entry name" value="Ribonuclease H-like superfamily/Ribonuclease H"/>
    <property type="match status" value="1"/>
</dbReference>
<dbReference type="InterPro" id="IPR025948">
    <property type="entry name" value="HTH-like_dom"/>
</dbReference>
<dbReference type="InterPro" id="IPR001584">
    <property type="entry name" value="Integrase_cat-core"/>
</dbReference>
<dbReference type="InterPro" id="IPR012337">
    <property type="entry name" value="RNaseH-like_sf"/>
</dbReference>
<dbReference type="InterPro" id="IPR036397">
    <property type="entry name" value="RNaseH_sf"/>
</dbReference>
<dbReference type="InterPro" id="IPR048020">
    <property type="entry name" value="Transpos_IS3"/>
</dbReference>
<dbReference type="InterPro" id="IPR050900">
    <property type="entry name" value="Transposase_IS3/IS150/IS904"/>
</dbReference>
<dbReference type="NCBIfam" id="NF033516">
    <property type="entry name" value="transpos_IS3"/>
    <property type="match status" value="1"/>
</dbReference>
<dbReference type="PANTHER" id="PTHR46889:SF6">
    <property type="entry name" value="TRANSPOSASE INSF FOR INSERTION SEQUENCE IS3B"/>
    <property type="match status" value="1"/>
</dbReference>
<dbReference type="PANTHER" id="PTHR46889">
    <property type="entry name" value="TRANSPOSASE INSF FOR INSERTION SEQUENCE IS3B-RELATED"/>
    <property type="match status" value="1"/>
</dbReference>
<dbReference type="Pfam" id="PF13276">
    <property type="entry name" value="HTH_21"/>
    <property type="match status" value="1"/>
</dbReference>
<dbReference type="Pfam" id="PF00665">
    <property type="entry name" value="rve"/>
    <property type="match status" value="1"/>
</dbReference>
<dbReference type="Pfam" id="PF13333">
    <property type="entry name" value="rve_2"/>
    <property type="match status" value="1"/>
</dbReference>
<dbReference type="SUPFAM" id="SSF53098">
    <property type="entry name" value="Ribonuclease H-like"/>
    <property type="match status" value="1"/>
</dbReference>
<dbReference type="PROSITE" id="PS50994">
    <property type="entry name" value="INTEGRASE"/>
    <property type="match status" value="1"/>
</dbReference>
<sequence length="288" mass="33563">MKYVFIEKHQAEFSIKAMCRVLRVARSGWYTWCQRRTRISTRQQFRQHCDSVVLAAFTRSKQRYCAPRLTDELRAQGYPFNVKTVAASLRCQGLRAKASRKFSPVSYRAHGLPVSENLLEQDFYASGPNQKWAGDITYLRTDEGWLYLAVVIDLWSRAVIGWSMSPRMTAQLACDALQMALWRRKRPWNVIVHTDRGGQYCSADYQAQLKRHNLRGSMSAKGCCYDNACVESFFHSLKVECIHGEHFISREIMRATVFNYIECDYNRWRRHSWCGGLSPEQFENQNLA</sequence>
<organism>
    <name type="scientific">Escherichia coli (strain K12)</name>
    <dbReference type="NCBI Taxonomy" id="83333"/>
    <lineage>
        <taxon>Bacteria</taxon>
        <taxon>Pseudomonadati</taxon>
        <taxon>Pseudomonadota</taxon>
        <taxon>Gammaproteobacteria</taxon>
        <taxon>Enterobacterales</taxon>
        <taxon>Enterobacteriaceae</taxon>
        <taxon>Escherichia</taxon>
    </lineage>
</organism>
<protein>
    <recommendedName>
        <fullName>Transposase InsF for insertion sequence IS3fB</fullName>
    </recommendedName>
</protein>
<feature type="chain" id="PRO_0000075416" description="Transposase InsF for insertion sequence IS3fB">
    <location>
        <begin position="1"/>
        <end position="288"/>
    </location>
</feature>
<feature type="domain" description="Integrase catalytic" evidence="1">
    <location>
        <begin position="124"/>
        <end position="287"/>
    </location>
</feature>
<comment type="function">
    <text>Involved in the transposition of the insertion sequence IS3.</text>
</comment>
<comment type="similarity">
    <text evidence="2">Belongs to the transposase IS3/IS150/IS904 family.</text>
</comment>
<name>INSF7_ECOLI</name>
<proteinExistence type="inferred from homology"/>